<sequence>MVQIVPHVANAHMVKTSRKGLLALVVVGVEECCPTRRCDLRDPNLVVDSNCLLSRSTHQSSLVEDSIIINHFRILNFNNRASIFLCLRIGVICSTQSKMYGGKSYILKGSVSLSLIILILLVTTLLVSAKNQPRISLIEVKTCNLAKGEWVEDKKRPLYSGFECKQWLSNIFSCRVMGRPDFSFEGYRWQPEGCNIPEFNRVNFLRRMQNKTIAFIGDSLGREQFQSLMCMATGGKESPEVQNVGSEYGLVIPKGAPRPGGWAYRFPTTNTTVLSYWSASLTDLVPMNNTDPPHLIAMHLDRPPAFIRNYLHRFHVLVLNTGHHWSRDKIEKNHWVMHVNGTRVEGGYFKNVENAKIFTIHSLVKWLDAQLPLHPRLKAFFTTISPRHEKCNNTIPLSRGSKITGEGGSLDTIVESAVNGTRVKILDITALSKLRDEAHIAGCKLKPKKASNVTSAPTFNDCLHWCLPGIPDTWNELLIAQL</sequence>
<reference key="1">
    <citation type="journal article" date="1999" name="Nature">
        <title>Sequence and analysis of chromosome 2 of the plant Arabidopsis thaliana.</title>
        <authorList>
            <person name="Lin X."/>
            <person name="Kaul S."/>
            <person name="Rounsley S.D."/>
            <person name="Shea T.P."/>
            <person name="Benito M.-I."/>
            <person name="Town C.D."/>
            <person name="Fujii C.Y."/>
            <person name="Mason T.M."/>
            <person name="Bowman C.L."/>
            <person name="Barnstead M.E."/>
            <person name="Feldblyum T.V."/>
            <person name="Buell C.R."/>
            <person name="Ketchum K.A."/>
            <person name="Lee J.J."/>
            <person name="Ronning C.M."/>
            <person name="Koo H.L."/>
            <person name="Moffat K.S."/>
            <person name="Cronin L.A."/>
            <person name="Shen M."/>
            <person name="Pai G."/>
            <person name="Van Aken S."/>
            <person name="Umayam L."/>
            <person name="Tallon L.J."/>
            <person name="Gill J.E."/>
            <person name="Adams M.D."/>
            <person name="Carrera A.J."/>
            <person name="Creasy T.H."/>
            <person name="Goodman H.M."/>
            <person name="Somerville C.R."/>
            <person name="Copenhaver G.P."/>
            <person name="Preuss D."/>
            <person name="Nierman W.C."/>
            <person name="White O."/>
            <person name="Eisen J.A."/>
            <person name="Salzberg S.L."/>
            <person name="Fraser C.M."/>
            <person name="Venter J.C."/>
        </authorList>
    </citation>
    <scope>NUCLEOTIDE SEQUENCE [LARGE SCALE GENOMIC DNA]</scope>
    <source>
        <strain>cv. Columbia</strain>
    </source>
</reference>
<reference key="2">
    <citation type="journal article" date="2017" name="Plant J.">
        <title>Araport11: a complete reannotation of the Arabidopsis thaliana reference genome.</title>
        <authorList>
            <person name="Cheng C.Y."/>
            <person name="Krishnakumar V."/>
            <person name="Chan A.P."/>
            <person name="Thibaud-Nissen F."/>
            <person name="Schobel S."/>
            <person name="Town C.D."/>
        </authorList>
    </citation>
    <scope>GENOME REANNOTATION</scope>
    <source>
        <strain>cv. Columbia</strain>
    </source>
</reference>
<reference key="3">
    <citation type="journal article" date="2007" name="Plant J.">
        <title>Arabidopsis ESK1 encodes a novel regulator of freezing tolerance.</title>
        <authorList>
            <person name="Xin Z."/>
            <person name="Mandaokar A."/>
            <person name="Chen J."/>
            <person name="Last R.L."/>
            <person name="Browse J."/>
        </authorList>
    </citation>
    <scope>GENE FAMILY</scope>
    <source>
        <strain>cv. Columbia</strain>
    </source>
</reference>
<reference key="4">
    <citation type="journal article" date="2010" name="Plant Physiol.">
        <title>TRICHOME BIREFRINGENCE and its homolog AT5G01360 encode plant-specific DUF231 proteins required for cellulose biosynthesis in Arabidopsis.</title>
        <authorList>
            <person name="Bischoff V."/>
            <person name="Nita S."/>
            <person name="Neumetzler L."/>
            <person name="Schindelasch D."/>
            <person name="Urbain A."/>
            <person name="Eshed R."/>
            <person name="Persson S."/>
            <person name="Delmer D."/>
            <person name="Scheible W.R."/>
        </authorList>
    </citation>
    <scope>GENE FAMILY</scope>
    <scope>NOMENCLATURE</scope>
</reference>
<reference key="5">
    <citation type="journal article" date="2010" name="Plant Signal. Behav.">
        <title>Involvement of TBL/DUF231 proteins into cell wall biology.</title>
        <authorList>
            <person name="Bischoff V."/>
            <person name="Selbig J."/>
            <person name="Scheible W.R."/>
        </authorList>
    </citation>
    <scope>3D-STRUCTURE MODELING</scope>
</reference>
<feature type="chain" id="PRO_0000425381" description="Protein trichome birefringence-like 15">
    <location>
        <begin position="1"/>
        <end position="482"/>
    </location>
</feature>
<feature type="transmembrane region" description="Helical; Signal-anchor for type II membrane protein" evidence="3">
    <location>
        <begin position="109"/>
        <end position="129"/>
    </location>
</feature>
<feature type="short sequence motif" description="GDS motif">
    <location>
        <begin position="217"/>
        <end position="219"/>
    </location>
</feature>
<feature type="short sequence motif" description="DCXHWCLPGXXDXWN motif">
    <location>
        <begin position="461"/>
        <end position="475"/>
    </location>
</feature>
<comment type="function">
    <text evidence="1 2">May act as a bridging protein that binds pectin and other cell wall polysaccharides. Probably involved in maintaining esterification of pectins (By similarity). May be involved in the specific O-acetylation of cell wall polymers (By similarity).</text>
</comment>
<comment type="subcellular location">
    <subcellularLocation>
        <location evidence="4">Membrane</location>
        <topology evidence="4">Single-pass type II membrane protein</topology>
    </subcellularLocation>
</comment>
<comment type="miscellaneous">
    <text evidence="5">Contains 2 motifs that are conserved in esterases, but it is unlikely that this protein belongs to the catalytically active pectin esterases.</text>
</comment>
<comment type="similarity">
    <text evidence="4">Belongs to the PC-esterase family. TBL subfamily.</text>
</comment>
<organism>
    <name type="scientific">Arabidopsis thaliana</name>
    <name type="common">Mouse-ear cress</name>
    <dbReference type="NCBI Taxonomy" id="3702"/>
    <lineage>
        <taxon>Eukaryota</taxon>
        <taxon>Viridiplantae</taxon>
        <taxon>Streptophyta</taxon>
        <taxon>Embryophyta</taxon>
        <taxon>Tracheophyta</taxon>
        <taxon>Spermatophyta</taxon>
        <taxon>Magnoliopsida</taxon>
        <taxon>eudicotyledons</taxon>
        <taxon>Gunneridae</taxon>
        <taxon>Pentapetalae</taxon>
        <taxon>rosids</taxon>
        <taxon>malvids</taxon>
        <taxon>Brassicales</taxon>
        <taxon>Brassicaceae</taxon>
        <taxon>Camelineae</taxon>
        <taxon>Arabidopsis</taxon>
    </lineage>
</organism>
<proteinExistence type="inferred from homology"/>
<name>TBL15_ARATH</name>
<evidence type="ECO:0000250" key="1">
    <source>
        <dbReference type="UniProtKB" id="Q9FG35"/>
    </source>
</evidence>
<evidence type="ECO:0000250" key="2">
    <source>
        <dbReference type="UniProtKB" id="Q9LY46"/>
    </source>
</evidence>
<evidence type="ECO:0000255" key="3"/>
<evidence type="ECO:0000305" key="4"/>
<evidence type="ECO:0000305" key="5">
    <source>
    </source>
</evidence>
<dbReference type="EMBL" id="AC004684">
    <property type="protein sequence ID" value="AAC23642.1"/>
    <property type="molecule type" value="Genomic_DNA"/>
</dbReference>
<dbReference type="EMBL" id="CP002685">
    <property type="protein sequence ID" value="AEC09439.1"/>
    <property type="molecule type" value="Genomic_DNA"/>
</dbReference>
<dbReference type="PIR" id="T02538">
    <property type="entry name" value="T02538"/>
</dbReference>
<dbReference type="RefSeq" id="NP_181308.1">
    <property type="nucleotide sequence ID" value="NM_129328.3"/>
</dbReference>
<dbReference type="SMR" id="O80940"/>
<dbReference type="STRING" id="3702.O80940"/>
<dbReference type="PaxDb" id="3702-AT2G37720.1"/>
<dbReference type="ProteomicsDB" id="234243"/>
<dbReference type="EnsemblPlants" id="AT2G37720.1">
    <property type="protein sequence ID" value="AT2G37720.1"/>
    <property type="gene ID" value="AT2G37720"/>
</dbReference>
<dbReference type="GeneID" id="818349"/>
<dbReference type="Gramene" id="AT2G37720.1">
    <property type="protein sequence ID" value="AT2G37720.1"/>
    <property type="gene ID" value="AT2G37720"/>
</dbReference>
<dbReference type="KEGG" id="ath:AT2G37720"/>
<dbReference type="Araport" id="AT2G37720"/>
<dbReference type="TAIR" id="AT2G37720">
    <property type="gene designation" value="TBL15"/>
</dbReference>
<dbReference type="eggNOG" id="ENOG502QRJ5">
    <property type="taxonomic scope" value="Eukaryota"/>
</dbReference>
<dbReference type="HOGENOM" id="CLU_020953_8_0_1"/>
<dbReference type="InParanoid" id="O80940"/>
<dbReference type="OMA" id="QPEGCNI"/>
<dbReference type="PhylomeDB" id="O80940"/>
<dbReference type="PRO" id="PR:O80940"/>
<dbReference type="Proteomes" id="UP000006548">
    <property type="component" value="Chromosome 2"/>
</dbReference>
<dbReference type="ExpressionAtlas" id="O80940">
    <property type="expression patterns" value="baseline and differential"/>
</dbReference>
<dbReference type="GO" id="GO:0009507">
    <property type="term" value="C:chloroplast"/>
    <property type="evidence" value="ECO:0007005"/>
    <property type="project" value="TAIR"/>
</dbReference>
<dbReference type="GO" id="GO:0005794">
    <property type="term" value="C:Golgi apparatus"/>
    <property type="evidence" value="ECO:0007669"/>
    <property type="project" value="UniProtKB-ARBA"/>
</dbReference>
<dbReference type="GO" id="GO:0016020">
    <property type="term" value="C:membrane"/>
    <property type="evidence" value="ECO:0007669"/>
    <property type="project" value="UniProtKB-SubCell"/>
</dbReference>
<dbReference type="GO" id="GO:0016740">
    <property type="term" value="F:transferase activity"/>
    <property type="evidence" value="ECO:0007669"/>
    <property type="project" value="InterPro"/>
</dbReference>
<dbReference type="GO" id="GO:0045492">
    <property type="term" value="P:xylan biosynthetic process"/>
    <property type="evidence" value="ECO:0007669"/>
    <property type="project" value="UniProtKB-ARBA"/>
</dbReference>
<dbReference type="InterPro" id="IPR026057">
    <property type="entry name" value="TBL_C"/>
</dbReference>
<dbReference type="InterPro" id="IPR025846">
    <property type="entry name" value="TBL_N"/>
</dbReference>
<dbReference type="PANTHER" id="PTHR13533">
    <property type="entry name" value="N-ACETYLNEURAMINATE 9-O-ACETYLTRANSFERASE"/>
    <property type="match status" value="1"/>
</dbReference>
<dbReference type="PANTHER" id="PTHR13533:SF16">
    <property type="entry name" value="PROTEIN TRICHOME BIREFRINGENCE-LIKE 14-RELATED"/>
    <property type="match status" value="1"/>
</dbReference>
<dbReference type="Pfam" id="PF13839">
    <property type="entry name" value="PC-Esterase"/>
    <property type="match status" value="1"/>
</dbReference>
<dbReference type="Pfam" id="PF14416">
    <property type="entry name" value="PMR5N"/>
    <property type="match status" value="1"/>
</dbReference>
<gene>
    <name type="primary">TBL15</name>
    <name type="ordered locus">At2g37720</name>
    <name type="ORF">F13M22.22</name>
</gene>
<accession>O80940</accession>
<protein>
    <recommendedName>
        <fullName>Protein trichome birefringence-like 15</fullName>
    </recommendedName>
</protein>
<keyword id="KW-0472">Membrane</keyword>
<keyword id="KW-1185">Reference proteome</keyword>
<keyword id="KW-0735">Signal-anchor</keyword>
<keyword id="KW-0812">Transmembrane</keyword>
<keyword id="KW-1133">Transmembrane helix</keyword>